<evidence type="ECO:0000255" key="1">
    <source>
        <dbReference type="HAMAP-Rule" id="MF_01347"/>
    </source>
</evidence>
<dbReference type="EC" id="7.1.2.2" evidence="1"/>
<dbReference type="EMBL" id="AJ235526">
    <property type="protein sequence ID" value="CAB89718.1"/>
    <property type="molecule type" value="Genomic_DNA"/>
</dbReference>
<dbReference type="SMR" id="Q9MU41"/>
<dbReference type="GO" id="GO:0009535">
    <property type="term" value="C:chloroplast thylakoid membrane"/>
    <property type="evidence" value="ECO:0007669"/>
    <property type="project" value="UniProtKB-SubCell"/>
</dbReference>
<dbReference type="GO" id="GO:0005739">
    <property type="term" value="C:mitochondrion"/>
    <property type="evidence" value="ECO:0007669"/>
    <property type="project" value="GOC"/>
</dbReference>
<dbReference type="GO" id="GO:0045259">
    <property type="term" value="C:proton-transporting ATP synthase complex"/>
    <property type="evidence" value="ECO:0007669"/>
    <property type="project" value="UniProtKB-KW"/>
</dbReference>
<dbReference type="GO" id="GO:0005524">
    <property type="term" value="F:ATP binding"/>
    <property type="evidence" value="ECO:0007669"/>
    <property type="project" value="UniProtKB-UniRule"/>
</dbReference>
<dbReference type="GO" id="GO:0016887">
    <property type="term" value="F:ATP hydrolysis activity"/>
    <property type="evidence" value="ECO:0007669"/>
    <property type="project" value="InterPro"/>
</dbReference>
<dbReference type="GO" id="GO:0046933">
    <property type="term" value="F:proton-transporting ATP synthase activity, rotational mechanism"/>
    <property type="evidence" value="ECO:0007669"/>
    <property type="project" value="UniProtKB-UniRule"/>
</dbReference>
<dbReference type="GO" id="GO:0042776">
    <property type="term" value="P:proton motive force-driven mitochondrial ATP synthesis"/>
    <property type="evidence" value="ECO:0007669"/>
    <property type="project" value="TreeGrafter"/>
</dbReference>
<dbReference type="CDD" id="cd18110">
    <property type="entry name" value="ATP-synt_F1_beta_C"/>
    <property type="match status" value="1"/>
</dbReference>
<dbReference type="CDD" id="cd18115">
    <property type="entry name" value="ATP-synt_F1_beta_N"/>
    <property type="match status" value="1"/>
</dbReference>
<dbReference type="CDD" id="cd01133">
    <property type="entry name" value="F1-ATPase_beta_CD"/>
    <property type="match status" value="1"/>
</dbReference>
<dbReference type="FunFam" id="1.10.1140.10:FF:000001">
    <property type="entry name" value="ATP synthase subunit beta"/>
    <property type="match status" value="1"/>
</dbReference>
<dbReference type="FunFam" id="3.40.50.12240:FF:000006">
    <property type="entry name" value="ATP synthase subunit beta"/>
    <property type="match status" value="1"/>
</dbReference>
<dbReference type="FunFam" id="3.40.50.300:FF:000004">
    <property type="entry name" value="ATP synthase subunit beta"/>
    <property type="match status" value="1"/>
</dbReference>
<dbReference type="FunFam" id="2.40.10.170:FF:000002">
    <property type="entry name" value="ATP synthase subunit beta, chloroplastic"/>
    <property type="match status" value="1"/>
</dbReference>
<dbReference type="Gene3D" id="2.40.10.170">
    <property type="match status" value="1"/>
</dbReference>
<dbReference type="Gene3D" id="1.10.1140.10">
    <property type="entry name" value="Bovine Mitochondrial F1-atpase, Atp Synthase Beta Chain, Chain D, domain 3"/>
    <property type="match status" value="1"/>
</dbReference>
<dbReference type="Gene3D" id="3.40.50.300">
    <property type="entry name" value="P-loop containing nucleotide triphosphate hydrolases"/>
    <property type="match status" value="1"/>
</dbReference>
<dbReference type="HAMAP" id="MF_01347">
    <property type="entry name" value="ATP_synth_beta_bact"/>
    <property type="match status" value="1"/>
</dbReference>
<dbReference type="InterPro" id="IPR003593">
    <property type="entry name" value="AAA+_ATPase"/>
</dbReference>
<dbReference type="InterPro" id="IPR055190">
    <property type="entry name" value="ATP-synt_VA_C"/>
</dbReference>
<dbReference type="InterPro" id="IPR005722">
    <property type="entry name" value="ATP_synth_F1_bsu"/>
</dbReference>
<dbReference type="InterPro" id="IPR020003">
    <property type="entry name" value="ATPase_a/bsu_AS"/>
</dbReference>
<dbReference type="InterPro" id="IPR050053">
    <property type="entry name" value="ATPase_alpha/beta_chains"/>
</dbReference>
<dbReference type="InterPro" id="IPR004100">
    <property type="entry name" value="ATPase_F1/V1/A1_a/bsu_N"/>
</dbReference>
<dbReference type="InterPro" id="IPR036121">
    <property type="entry name" value="ATPase_F1/V1/A1_a/bsu_N_sf"/>
</dbReference>
<dbReference type="InterPro" id="IPR000194">
    <property type="entry name" value="ATPase_F1/V1/A1_a/bsu_nucl-bd"/>
</dbReference>
<dbReference type="InterPro" id="IPR024034">
    <property type="entry name" value="ATPase_F1/V1_b/a_C"/>
</dbReference>
<dbReference type="InterPro" id="IPR027417">
    <property type="entry name" value="P-loop_NTPase"/>
</dbReference>
<dbReference type="NCBIfam" id="TIGR01039">
    <property type="entry name" value="atpD"/>
    <property type="match status" value="1"/>
</dbReference>
<dbReference type="PANTHER" id="PTHR15184">
    <property type="entry name" value="ATP SYNTHASE"/>
    <property type="match status" value="1"/>
</dbReference>
<dbReference type="PANTHER" id="PTHR15184:SF71">
    <property type="entry name" value="ATP SYNTHASE SUBUNIT BETA, MITOCHONDRIAL"/>
    <property type="match status" value="1"/>
</dbReference>
<dbReference type="Pfam" id="PF00006">
    <property type="entry name" value="ATP-synt_ab"/>
    <property type="match status" value="1"/>
</dbReference>
<dbReference type="Pfam" id="PF02874">
    <property type="entry name" value="ATP-synt_ab_N"/>
    <property type="match status" value="1"/>
</dbReference>
<dbReference type="Pfam" id="PF22919">
    <property type="entry name" value="ATP-synt_VA_C"/>
    <property type="match status" value="1"/>
</dbReference>
<dbReference type="SMART" id="SM00382">
    <property type="entry name" value="AAA"/>
    <property type="match status" value="1"/>
</dbReference>
<dbReference type="SUPFAM" id="SSF47917">
    <property type="entry name" value="C-terminal domain of alpha and beta subunits of F1 ATP synthase"/>
    <property type="match status" value="1"/>
</dbReference>
<dbReference type="SUPFAM" id="SSF50615">
    <property type="entry name" value="N-terminal domain of alpha and beta subunits of F1 ATP synthase"/>
    <property type="match status" value="1"/>
</dbReference>
<dbReference type="SUPFAM" id="SSF52540">
    <property type="entry name" value="P-loop containing nucleoside triphosphate hydrolases"/>
    <property type="match status" value="1"/>
</dbReference>
<dbReference type="PROSITE" id="PS00152">
    <property type="entry name" value="ATPASE_ALPHA_BETA"/>
    <property type="match status" value="1"/>
</dbReference>
<gene>
    <name evidence="1" type="primary">atpB</name>
</gene>
<accession>Q9MU41</accession>
<keyword id="KW-0066">ATP synthesis</keyword>
<keyword id="KW-0067">ATP-binding</keyword>
<keyword id="KW-0139">CF(1)</keyword>
<keyword id="KW-0150">Chloroplast</keyword>
<keyword id="KW-0375">Hydrogen ion transport</keyword>
<keyword id="KW-0406">Ion transport</keyword>
<keyword id="KW-0472">Membrane</keyword>
<keyword id="KW-0547">Nucleotide-binding</keyword>
<keyword id="KW-0934">Plastid</keyword>
<keyword id="KW-0793">Thylakoid</keyword>
<keyword id="KW-1278">Translocase</keyword>
<keyword id="KW-0813">Transport</keyword>
<protein>
    <recommendedName>
        <fullName evidence="1">ATP synthase subunit beta, chloroplastic</fullName>
        <ecNumber evidence="1">7.1.2.2</ecNumber>
    </recommendedName>
    <alternativeName>
        <fullName evidence="1">ATP synthase F1 sector subunit beta</fullName>
    </alternativeName>
    <alternativeName>
        <fullName evidence="1">F-ATPase subunit beta</fullName>
    </alternativeName>
</protein>
<proteinExistence type="inferred from homology"/>
<comment type="function">
    <text evidence="1">Produces ATP from ADP in the presence of a proton gradient across the membrane. The catalytic sites are hosted primarily by the beta subunits.</text>
</comment>
<comment type="catalytic activity">
    <reaction evidence="1">
        <text>ATP + H2O + 4 H(+)(in) = ADP + phosphate + 5 H(+)(out)</text>
        <dbReference type="Rhea" id="RHEA:57720"/>
        <dbReference type="ChEBI" id="CHEBI:15377"/>
        <dbReference type="ChEBI" id="CHEBI:15378"/>
        <dbReference type="ChEBI" id="CHEBI:30616"/>
        <dbReference type="ChEBI" id="CHEBI:43474"/>
        <dbReference type="ChEBI" id="CHEBI:456216"/>
        <dbReference type="EC" id="7.1.2.2"/>
    </reaction>
</comment>
<comment type="subunit">
    <text evidence="1">F-type ATPases have 2 components, CF(1) - the catalytic core - and CF(0) - the membrane proton channel. CF(1) has five subunits: alpha(3), beta(3), gamma(1), delta(1), epsilon(1). CF(0) has four main subunits: a(1), b(1), b'(1) and c(9-12).</text>
</comment>
<comment type="subcellular location">
    <subcellularLocation>
        <location evidence="1">Plastid</location>
        <location evidence="1">Chloroplast thylakoid membrane</location>
        <topology evidence="1">Peripheral membrane protein</topology>
    </subcellularLocation>
</comment>
<comment type="similarity">
    <text evidence="1">Belongs to the ATPase alpha/beta chains family.</text>
</comment>
<geneLocation type="chloroplast"/>
<feature type="chain" id="PRO_0000254496" description="ATP synthase subunit beta, chloroplastic">
    <location>
        <begin position="1"/>
        <end position="498"/>
    </location>
</feature>
<feature type="binding site" evidence="1">
    <location>
        <begin position="172"/>
        <end position="179"/>
    </location>
    <ligand>
        <name>ATP</name>
        <dbReference type="ChEBI" id="CHEBI:30616"/>
    </ligand>
</feature>
<sequence length="498" mass="53624">MRINPTTSGPGVSTLEKKNLGRIAQIIGPVLDVAFPPGKMPNIYNALVVKGRDTVGQPINVTCEVQQLLGNNRVRAVAMSATDGLMRGMEVIDTGAPLSVPVGGATLGRIFNVLGEPVDNLGPVDTRTTSPIHRSAPAFIQLDTKLSIFETGIKVVDLLAPYRRGGKIGLFGGAGVGKTVLIMELINNIAKAHGGVSVFGGVGERTREGNDLYMEMKESGVINEQNIAESKVALVYGQMNEPPGARMRVGLTALTMAEYFRDVNEQDVLLFIDNIFRFVQAGSEVSALLGRMPSAVGYQPTLSTEMGSLQERITSTKEGSITSIQAVYVPADDLTDPAPATTFAHLDATTVLSRGLAAKGIYPAVDPLDSTSTMLQPRIVGEEHYETAQRVKQTSQRYKELQDIIAILGLDELSEEDRLTVARARKIERFLSQPFFVAEVFTGSPGKYVGLAETIRGFQLILSGELDGLPEQAFYLVGNIDEATAKAMNLEVESKLKK</sequence>
<name>ATPB_MAGTR</name>
<organism>
    <name type="scientific">Magnolia tripetala</name>
    <name type="common">Umbrella-tree</name>
    <name type="synonym">Magnolia virginiana var. tripetala</name>
    <dbReference type="NCBI Taxonomy" id="44926"/>
    <lineage>
        <taxon>Eukaryota</taxon>
        <taxon>Viridiplantae</taxon>
        <taxon>Streptophyta</taxon>
        <taxon>Embryophyta</taxon>
        <taxon>Tracheophyta</taxon>
        <taxon>Spermatophyta</taxon>
        <taxon>Magnoliopsida</taxon>
        <taxon>Magnoliidae</taxon>
        <taxon>Magnoliales</taxon>
        <taxon>Magnoliaceae</taxon>
        <taxon>Magnolia</taxon>
    </lineage>
</organism>
<reference key="1">
    <citation type="journal article" date="2000" name="Syst. Biol.">
        <title>Phylogenetics of flowering plants based upon a combined analysis of plastid atpB and rbcL gene sequences.</title>
        <authorList>
            <person name="Savolainen V."/>
            <person name="Chase M.W."/>
            <person name="Morton C.M."/>
            <person name="Hoot S.B."/>
            <person name="Soltis D.E."/>
            <person name="Bayer C."/>
            <person name="Fay M.F."/>
            <person name="de Bruijn A."/>
            <person name="Sullivan S."/>
            <person name="Qiu Y.-L."/>
        </authorList>
    </citation>
    <scope>NUCLEOTIDE SEQUENCE [GENOMIC DNA]</scope>
</reference>